<name>SCBTY_OLIMR</name>
<proteinExistence type="evidence at transcript level"/>
<comment type="function">
    <text evidence="1">Sodium channel inhibitor (By similarity). Possesses potent toxicity in mice but induces only paralysis in cotton bollworm.</text>
</comment>
<comment type="subcellular location">
    <subcellularLocation>
        <location evidence="1">Secreted</location>
    </subcellularLocation>
</comment>
<comment type="tissue specificity">
    <text>Expressed by the venom gland.</text>
</comment>
<comment type="domain">
    <text evidence="4">Has the structural arrangement of an alpha-helix connected to antiparallel beta-sheets by disulfide bonds (CS-alpha/beta).</text>
</comment>
<comment type="toxic dose">
    <text evidence="3">LD(50) is 180 ug/kg by subcutaneous injection into mice.</text>
</comment>
<comment type="similarity">
    <text evidence="4">Belongs to the long (4 C-C) scorpion toxin superfamily. Sodium channel inhibitor family. Beta subfamily.</text>
</comment>
<keyword id="KW-1015">Disulfide bond</keyword>
<keyword id="KW-0872">Ion channel impairing toxin</keyword>
<keyword id="KW-0528">Neurotoxin</keyword>
<keyword id="KW-0964">Secreted</keyword>
<keyword id="KW-0732">Signal</keyword>
<keyword id="KW-0800">Toxin</keyword>
<keyword id="KW-0738">Voltage-gated sodium channel impairing toxin</keyword>
<sequence length="83" mass="9611">MKAALLLVISTLMLIGVLTKKSGYPIQHDGCKNWCVFNHFCENICETYGGSGYCYFWKLACWCDNIHNWVPTWSRETNKCRAK</sequence>
<evidence type="ECO:0000250" key="1"/>
<evidence type="ECO:0000255" key="2">
    <source>
        <dbReference type="PROSITE-ProRule" id="PRU01210"/>
    </source>
</evidence>
<evidence type="ECO:0000269" key="3">
    <source>
    </source>
</evidence>
<evidence type="ECO:0000305" key="4"/>
<accession>M4GX67</accession>
<protein>
    <recommendedName>
        <fullName>BmKBT-like peptide</fullName>
    </recommendedName>
    <alternativeName>
        <fullName>Beta-toxin BmKBy</fullName>
    </alternativeName>
</protein>
<reference key="1">
    <citation type="journal article" date="2012" name="Peptides">
        <title>Tremendous intron length differences of the BmKBT and a novel BmKBT-like peptide genes provide a mechanical basis for the rapid or constitutive expression of the peptides.</title>
        <authorList>
            <person name="Nie Y."/>
            <person name="Zeng X.C."/>
            <person name="Luo X."/>
            <person name="Wu S."/>
            <person name="Zhang L."/>
            <person name="Cao H."/>
            <person name="Zhou J."/>
            <person name="Zhou L."/>
        </authorList>
    </citation>
    <scope>NUCLEOTIDE SEQUENCE [GENOMIC DNA / MRNA]</scope>
    <scope>BIOASSAY</scope>
    <scope>TOXIC DOSE</scope>
</reference>
<dbReference type="EMBL" id="JN940008">
    <property type="protein sequence ID" value="AFH68057.1"/>
    <property type="molecule type" value="mRNA"/>
</dbReference>
<dbReference type="EMBL" id="JN968973">
    <property type="protein sequence ID" value="AFR43269.1"/>
    <property type="molecule type" value="Genomic_DNA"/>
</dbReference>
<dbReference type="SMR" id="M4GX67"/>
<dbReference type="GO" id="GO:0005576">
    <property type="term" value="C:extracellular region"/>
    <property type="evidence" value="ECO:0007669"/>
    <property type="project" value="UniProtKB-SubCell"/>
</dbReference>
<dbReference type="GO" id="GO:0019871">
    <property type="term" value="F:sodium channel inhibitor activity"/>
    <property type="evidence" value="ECO:0007669"/>
    <property type="project" value="InterPro"/>
</dbReference>
<dbReference type="GO" id="GO:0090729">
    <property type="term" value="F:toxin activity"/>
    <property type="evidence" value="ECO:0007669"/>
    <property type="project" value="UniProtKB-KW"/>
</dbReference>
<dbReference type="CDD" id="cd23106">
    <property type="entry name" value="neurotoxins_LC_scorpion"/>
    <property type="match status" value="1"/>
</dbReference>
<dbReference type="Gene3D" id="3.30.30.10">
    <property type="entry name" value="Knottin, scorpion toxin-like"/>
    <property type="match status" value="1"/>
</dbReference>
<dbReference type="InterPro" id="IPR044062">
    <property type="entry name" value="LCN-type_CS_alpha_beta_dom"/>
</dbReference>
<dbReference type="InterPro" id="IPR036574">
    <property type="entry name" value="Scorpion_toxin-like_sf"/>
</dbReference>
<dbReference type="InterPro" id="IPR018218">
    <property type="entry name" value="Scorpion_toxinL"/>
</dbReference>
<dbReference type="InterPro" id="IPR002061">
    <property type="entry name" value="Scorpion_toxinL/defensin"/>
</dbReference>
<dbReference type="Pfam" id="PF00537">
    <property type="entry name" value="Toxin_3"/>
    <property type="match status" value="1"/>
</dbReference>
<dbReference type="PRINTS" id="PR00285">
    <property type="entry name" value="SCORPNTOXIN"/>
</dbReference>
<dbReference type="SUPFAM" id="SSF57095">
    <property type="entry name" value="Scorpion toxin-like"/>
    <property type="match status" value="1"/>
</dbReference>
<dbReference type="PROSITE" id="PS51863">
    <property type="entry name" value="LCN_CSAB"/>
    <property type="match status" value="1"/>
</dbReference>
<feature type="signal peptide" evidence="1">
    <location>
        <begin position="1"/>
        <end position="19"/>
    </location>
</feature>
<feature type="chain" id="PRO_0000428820" description="BmKBT-like peptide">
    <location>
        <begin position="20"/>
        <end position="82"/>
    </location>
</feature>
<feature type="propeptide" id="PRO_0000428821" description="Removed by a carboxypeptidase" evidence="1">
    <location>
        <position position="83"/>
    </location>
</feature>
<feature type="domain" description="LCN-type CS-alpha/beta" evidence="2">
    <location>
        <begin position="21"/>
        <end position="81"/>
    </location>
</feature>
<feature type="disulfide bond" evidence="2">
    <location>
        <begin position="31"/>
        <end position="80"/>
    </location>
</feature>
<feature type="disulfide bond" evidence="2">
    <location>
        <begin position="35"/>
        <end position="54"/>
    </location>
</feature>
<feature type="disulfide bond" evidence="2">
    <location>
        <begin position="41"/>
        <end position="61"/>
    </location>
</feature>
<feature type="disulfide bond" evidence="2">
    <location>
        <begin position="45"/>
        <end position="63"/>
    </location>
</feature>
<organism>
    <name type="scientific">Olivierus martensii</name>
    <name type="common">Manchurian scorpion</name>
    <name type="synonym">Mesobuthus martensii</name>
    <dbReference type="NCBI Taxonomy" id="34649"/>
    <lineage>
        <taxon>Eukaryota</taxon>
        <taxon>Metazoa</taxon>
        <taxon>Ecdysozoa</taxon>
        <taxon>Arthropoda</taxon>
        <taxon>Chelicerata</taxon>
        <taxon>Arachnida</taxon>
        <taxon>Scorpiones</taxon>
        <taxon>Buthida</taxon>
        <taxon>Buthoidea</taxon>
        <taxon>Buthidae</taxon>
        <taxon>Olivierus</taxon>
    </lineage>
</organism>